<keyword id="KW-0342">GTP-binding</keyword>
<keyword id="KW-0378">Hydrolase</keyword>
<keyword id="KW-0479">Metal-binding</keyword>
<keyword id="KW-0547">Nucleotide-binding</keyword>
<keyword id="KW-0554">One-carbon metabolism</keyword>
<keyword id="KW-1185">Reference proteome</keyword>
<keyword id="KW-0862">Zinc</keyword>
<reference key="1">
    <citation type="journal article" date="2003" name="Proc. Natl. Acad. Sci. U.S.A.">
        <title>Complete genome sequence of the Q-fever pathogen, Coxiella burnetii.</title>
        <authorList>
            <person name="Seshadri R."/>
            <person name="Paulsen I.T."/>
            <person name="Eisen J.A."/>
            <person name="Read T.D."/>
            <person name="Nelson K.E."/>
            <person name="Nelson W.C."/>
            <person name="Ward N.L."/>
            <person name="Tettelin H."/>
            <person name="Davidsen T.M."/>
            <person name="Beanan M.J."/>
            <person name="DeBoy R.T."/>
            <person name="Daugherty S.C."/>
            <person name="Brinkac L.M."/>
            <person name="Madupu R."/>
            <person name="Dodson R.J."/>
            <person name="Khouri H.M."/>
            <person name="Lee K.H."/>
            <person name="Carty H.A."/>
            <person name="Scanlan D."/>
            <person name="Heinzen R.A."/>
            <person name="Thompson H.A."/>
            <person name="Samuel J.E."/>
            <person name="Fraser C.M."/>
            <person name="Heidelberg J.F."/>
        </authorList>
    </citation>
    <scope>NUCLEOTIDE SEQUENCE [LARGE SCALE GENOMIC DNA]</scope>
    <source>
        <strain>RSA 493 / Nine Mile phase I</strain>
    </source>
</reference>
<name>GCH1_COXBU</name>
<dbReference type="EC" id="3.5.4.16" evidence="2"/>
<dbReference type="EMBL" id="AE016828">
    <property type="protein sequence ID" value="AAO90329.2"/>
    <property type="status" value="ALT_INIT"/>
    <property type="molecule type" value="Genomic_DNA"/>
</dbReference>
<dbReference type="RefSeq" id="NP_819815.2">
    <property type="nucleotide sequence ID" value="NC_002971.3"/>
</dbReference>
<dbReference type="SMR" id="Q83DE3"/>
<dbReference type="STRING" id="227377.CBU_0795"/>
<dbReference type="EnsemblBacteria" id="AAO90329">
    <property type="protein sequence ID" value="AAO90329"/>
    <property type="gene ID" value="CBU_0795"/>
</dbReference>
<dbReference type="GeneID" id="1208688"/>
<dbReference type="KEGG" id="cbu:CBU_0795"/>
<dbReference type="PATRIC" id="fig|227377.7.peg.783"/>
<dbReference type="eggNOG" id="COG0302">
    <property type="taxonomic scope" value="Bacteria"/>
</dbReference>
<dbReference type="HOGENOM" id="CLU_049768_3_1_6"/>
<dbReference type="OrthoDB" id="9801207at2"/>
<dbReference type="UniPathway" id="UPA00848">
    <property type="reaction ID" value="UER00151"/>
</dbReference>
<dbReference type="Proteomes" id="UP000002671">
    <property type="component" value="Chromosome"/>
</dbReference>
<dbReference type="GO" id="GO:0005737">
    <property type="term" value="C:cytoplasm"/>
    <property type="evidence" value="ECO:0000318"/>
    <property type="project" value="GO_Central"/>
</dbReference>
<dbReference type="GO" id="GO:0005525">
    <property type="term" value="F:GTP binding"/>
    <property type="evidence" value="ECO:0000318"/>
    <property type="project" value="GO_Central"/>
</dbReference>
<dbReference type="GO" id="GO:0003934">
    <property type="term" value="F:GTP cyclohydrolase I activity"/>
    <property type="evidence" value="ECO:0000318"/>
    <property type="project" value="GO_Central"/>
</dbReference>
<dbReference type="GO" id="GO:0008270">
    <property type="term" value="F:zinc ion binding"/>
    <property type="evidence" value="ECO:0000318"/>
    <property type="project" value="GO_Central"/>
</dbReference>
<dbReference type="GO" id="GO:0006730">
    <property type="term" value="P:one-carbon metabolic process"/>
    <property type="evidence" value="ECO:0007669"/>
    <property type="project" value="UniProtKB-UniRule"/>
</dbReference>
<dbReference type="GO" id="GO:0006729">
    <property type="term" value="P:tetrahydrobiopterin biosynthetic process"/>
    <property type="evidence" value="ECO:0000318"/>
    <property type="project" value="GO_Central"/>
</dbReference>
<dbReference type="GO" id="GO:0046654">
    <property type="term" value="P:tetrahydrofolate biosynthetic process"/>
    <property type="evidence" value="ECO:0007669"/>
    <property type="project" value="UniProtKB-UniRule"/>
</dbReference>
<dbReference type="FunFam" id="3.30.1130.10:FF:000001">
    <property type="entry name" value="GTP cyclohydrolase 1"/>
    <property type="match status" value="1"/>
</dbReference>
<dbReference type="Gene3D" id="1.10.286.10">
    <property type="match status" value="1"/>
</dbReference>
<dbReference type="Gene3D" id="3.30.1130.10">
    <property type="match status" value="1"/>
</dbReference>
<dbReference type="HAMAP" id="MF_00223">
    <property type="entry name" value="FolE"/>
    <property type="match status" value="1"/>
</dbReference>
<dbReference type="InterPro" id="IPR043133">
    <property type="entry name" value="GTP-CH-I_C/QueF"/>
</dbReference>
<dbReference type="InterPro" id="IPR043134">
    <property type="entry name" value="GTP-CH-I_N"/>
</dbReference>
<dbReference type="InterPro" id="IPR001474">
    <property type="entry name" value="GTP_CycHdrlase_I"/>
</dbReference>
<dbReference type="InterPro" id="IPR018234">
    <property type="entry name" value="GTP_CycHdrlase_I_CS"/>
</dbReference>
<dbReference type="InterPro" id="IPR020602">
    <property type="entry name" value="GTP_CycHdrlase_I_dom"/>
</dbReference>
<dbReference type="NCBIfam" id="TIGR00063">
    <property type="entry name" value="folE"/>
    <property type="match status" value="1"/>
</dbReference>
<dbReference type="NCBIfam" id="NF006825">
    <property type="entry name" value="PRK09347.1-2"/>
    <property type="match status" value="1"/>
</dbReference>
<dbReference type="NCBIfam" id="NF006826">
    <property type="entry name" value="PRK09347.1-3"/>
    <property type="match status" value="1"/>
</dbReference>
<dbReference type="PANTHER" id="PTHR11109:SF7">
    <property type="entry name" value="GTP CYCLOHYDROLASE 1"/>
    <property type="match status" value="1"/>
</dbReference>
<dbReference type="PANTHER" id="PTHR11109">
    <property type="entry name" value="GTP CYCLOHYDROLASE I"/>
    <property type="match status" value="1"/>
</dbReference>
<dbReference type="Pfam" id="PF01227">
    <property type="entry name" value="GTP_cyclohydroI"/>
    <property type="match status" value="1"/>
</dbReference>
<dbReference type="SUPFAM" id="SSF55620">
    <property type="entry name" value="Tetrahydrobiopterin biosynthesis enzymes-like"/>
    <property type="match status" value="1"/>
</dbReference>
<dbReference type="PROSITE" id="PS00859">
    <property type="entry name" value="GTP_CYCLOHYDROL_1_1"/>
    <property type="match status" value="1"/>
</dbReference>
<dbReference type="PROSITE" id="PS00860">
    <property type="entry name" value="GTP_CYCLOHYDROL_1_2"/>
    <property type="match status" value="1"/>
</dbReference>
<accession>Q83DE3</accession>
<gene>
    <name evidence="2" type="primary">folE</name>
    <name type="ordered locus">CBU_0795</name>
</gene>
<feature type="chain" id="PRO_0000119402" description="GTP cyclohydrolase 1">
    <location>
        <begin position="1"/>
        <end position="184"/>
    </location>
</feature>
<feature type="binding site" evidence="2">
    <location>
        <position position="75"/>
    </location>
    <ligand>
        <name>Zn(2+)</name>
        <dbReference type="ChEBI" id="CHEBI:29105"/>
    </ligand>
</feature>
<feature type="binding site" evidence="2">
    <location>
        <position position="78"/>
    </location>
    <ligand>
        <name>Zn(2+)</name>
        <dbReference type="ChEBI" id="CHEBI:29105"/>
    </ligand>
</feature>
<feature type="binding site" evidence="2">
    <location>
        <position position="146"/>
    </location>
    <ligand>
        <name>Zn(2+)</name>
        <dbReference type="ChEBI" id="CHEBI:29105"/>
    </ligand>
</feature>
<protein>
    <recommendedName>
        <fullName evidence="2">GTP cyclohydrolase 1</fullName>
        <ecNumber evidence="2">3.5.4.16</ecNumber>
    </recommendedName>
    <alternativeName>
        <fullName evidence="2">GTP cyclohydrolase I</fullName>
        <shortName evidence="2">GTP-CH-I</shortName>
    </alternativeName>
</protein>
<organism>
    <name type="scientific">Coxiella burnetii (strain RSA 493 / Nine Mile phase I)</name>
    <dbReference type="NCBI Taxonomy" id="227377"/>
    <lineage>
        <taxon>Bacteria</taxon>
        <taxon>Pseudomonadati</taxon>
        <taxon>Pseudomonadota</taxon>
        <taxon>Gammaproteobacteria</taxon>
        <taxon>Legionellales</taxon>
        <taxon>Coxiellaceae</taxon>
        <taxon>Coxiella</taxon>
    </lineage>
</organism>
<sequence length="184" mass="20777">MSNTIADHVKAILIALGEDPNREGLRDTPKRYEKALEHLTKGYHEKLPSVVKKAVFQSGMDEMVILKDIELYSLCEHHLLPFIGRCHVAYLPSGKIIGISKLARIVDMFAKRLQVQENLTKQIAEAILTATEAKGVGVIIEAKHLCMMMRGVEKQNSEMTTSVMLGTFRKDDRTRSEFLSLIRK</sequence>
<comment type="catalytic activity">
    <reaction evidence="2">
        <text>GTP + H2O = 7,8-dihydroneopterin 3'-triphosphate + formate + H(+)</text>
        <dbReference type="Rhea" id="RHEA:17473"/>
        <dbReference type="ChEBI" id="CHEBI:15377"/>
        <dbReference type="ChEBI" id="CHEBI:15378"/>
        <dbReference type="ChEBI" id="CHEBI:15740"/>
        <dbReference type="ChEBI" id="CHEBI:37565"/>
        <dbReference type="ChEBI" id="CHEBI:58462"/>
        <dbReference type="EC" id="3.5.4.16"/>
    </reaction>
</comment>
<comment type="pathway">
    <text evidence="2">Cofactor biosynthesis; 7,8-dihydroneopterin triphosphate biosynthesis; 7,8-dihydroneopterin triphosphate from GTP: step 1/1.</text>
</comment>
<comment type="subunit">
    <text evidence="1">Toroid-shaped homodecamer, composed of two pentamers of five dimers.</text>
</comment>
<comment type="similarity">
    <text evidence="2">Belongs to the GTP cyclohydrolase I family.</text>
</comment>
<comment type="sequence caution" evidence="3">
    <conflict type="erroneous initiation">
        <sequence resource="EMBL-CDS" id="AAO90329"/>
    </conflict>
</comment>
<proteinExistence type="inferred from homology"/>
<evidence type="ECO:0000250" key="1"/>
<evidence type="ECO:0000255" key="2">
    <source>
        <dbReference type="HAMAP-Rule" id="MF_00223"/>
    </source>
</evidence>
<evidence type="ECO:0000305" key="3"/>